<reference key="1">
    <citation type="journal article" date="2004" name="J. Infect. Dis.">
        <title>Progress toward characterization of the group A Streptococcus metagenome: complete genome sequence of a macrolide-resistant serotype M6 strain.</title>
        <authorList>
            <person name="Banks D.J."/>
            <person name="Porcella S.F."/>
            <person name="Barbian K.D."/>
            <person name="Beres S.B."/>
            <person name="Philips L.E."/>
            <person name="Voyich J.M."/>
            <person name="DeLeo F.R."/>
            <person name="Martin J.M."/>
            <person name="Somerville G.A."/>
            <person name="Musser J.M."/>
        </authorList>
    </citation>
    <scope>NUCLEOTIDE SEQUENCE [LARGE SCALE GENOMIC DNA]</scope>
    <source>
        <strain>ATCC BAA-946 / MGAS10394</strain>
    </source>
</reference>
<gene>
    <name evidence="1" type="primary">scpB</name>
    <name type="ordered locus">M6_Spy0335</name>
</gene>
<protein>
    <recommendedName>
        <fullName evidence="1">Segregation and condensation protein B</fullName>
    </recommendedName>
</protein>
<evidence type="ECO:0000255" key="1">
    <source>
        <dbReference type="HAMAP-Rule" id="MF_01804"/>
    </source>
</evidence>
<proteinExistence type="inferred from homology"/>
<accession>Q5XDP3</accession>
<keyword id="KW-0131">Cell cycle</keyword>
<keyword id="KW-0132">Cell division</keyword>
<keyword id="KW-0159">Chromosome partition</keyword>
<keyword id="KW-0963">Cytoplasm</keyword>
<dbReference type="EMBL" id="CP000003">
    <property type="protein sequence ID" value="AAT86470.1"/>
    <property type="molecule type" value="Genomic_DNA"/>
</dbReference>
<dbReference type="RefSeq" id="WP_002985894.1">
    <property type="nucleotide sequence ID" value="NC_006086.1"/>
</dbReference>
<dbReference type="SMR" id="Q5XDP3"/>
<dbReference type="GeneID" id="69901359"/>
<dbReference type="KEGG" id="spa:M6_Spy0335"/>
<dbReference type="HOGENOM" id="CLU_045647_5_3_9"/>
<dbReference type="Proteomes" id="UP000001167">
    <property type="component" value="Chromosome"/>
</dbReference>
<dbReference type="GO" id="GO:0005737">
    <property type="term" value="C:cytoplasm"/>
    <property type="evidence" value="ECO:0007669"/>
    <property type="project" value="UniProtKB-SubCell"/>
</dbReference>
<dbReference type="GO" id="GO:0051301">
    <property type="term" value="P:cell division"/>
    <property type="evidence" value="ECO:0007669"/>
    <property type="project" value="UniProtKB-KW"/>
</dbReference>
<dbReference type="GO" id="GO:0051304">
    <property type="term" value="P:chromosome separation"/>
    <property type="evidence" value="ECO:0007669"/>
    <property type="project" value="InterPro"/>
</dbReference>
<dbReference type="GO" id="GO:0006260">
    <property type="term" value="P:DNA replication"/>
    <property type="evidence" value="ECO:0007669"/>
    <property type="project" value="UniProtKB-UniRule"/>
</dbReference>
<dbReference type="Gene3D" id="1.10.10.10">
    <property type="entry name" value="Winged helix-like DNA-binding domain superfamily/Winged helix DNA-binding domain"/>
    <property type="match status" value="2"/>
</dbReference>
<dbReference type="HAMAP" id="MF_01804">
    <property type="entry name" value="ScpB"/>
    <property type="match status" value="1"/>
</dbReference>
<dbReference type="InterPro" id="IPR005234">
    <property type="entry name" value="ScpB_csome_segregation"/>
</dbReference>
<dbReference type="InterPro" id="IPR036388">
    <property type="entry name" value="WH-like_DNA-bd_sf"/>
</dbReference>
<dbReference type="InterPro" id="IPR036390">
    <property type="entry name" value="WH_DNA-bd_sf"/>
</dbReference>
<dbReference type="NCBIfam" id="TIGR00281">
    <property type="entry name" value="SMC-Scp complex subunit ScpB"/>
    <property type="match status" value="1"/>
</dbReference>
<dbReference type="PANTHER" id="PTHR34298">
    <property type="entry name" value="SEGREGATION AND CONDENSATION PROTEIN B"/>
    <property type="match status" value="1"/>
</dbReference>
<dbReference type="PANTHER" id="PTHR34298:SF2">
    <property type="entry name" value="SEGREGATION AND CONDENSATION PROTEIN B"/>
    <property type="match status" value="1"/>
</dbReference>
<dbReference type="Pfam" id="PF04079">
    <property type="entry name" value="SMC_ScpB"/>
    <property type="match status" value="1"/>
</dbReference>
<dbReference type="PIRSF" id="PIRSF019345">
    <property type="entry name" value="ScpB"/>
    <property type="match status" value="1"/>
</dbReference>
<dbReference type="SUPFAM" id="SSF46785">
    <property type="entry name" value="Winged helix' DNA-binding domain"/>
    <property type="match status" value="2"/>
</dbReference>
<sequence>MTYLSQIEALLFVAGEEGLSLRHLASMLSLTPTALQQQLEKLSQKYEKDQHSSLCLIETANTYRLVTKEGFAELLRAYAKTPMNQSLSRASLEVLSIVAYKQPITRIEIDDIRGVNSSGALSKLLAFDLIREAGKKDVVGRPHLYATTDYFLDYMGINHLDELIEVSAVEPADEEIALFRTQD</sequence>
<feature type="chain" id="PRO_0000211163" description="Segregation and condensation protein B">
    <location>
        <begin position="1"/>
        <end position="183"/>
    </location>
</feature>
<organism>
    <name type="scientific">Streptococcus pyogenes serotype M6 (strain ATCC BAA-946 / MGAS10394)</name>
    <dbReference type="NCBI Taxonomy" id="286636"/>
    <lineage>
        <taxon>Bacteria</taxon>
        <taxon>Bacillati</taxon>
        <taxon>Bacillota</taxon>
        <taxon>Bacilli</taxon>
        <taxon>Lactobacillales</taxon>
        <taxon>Streptococcaceae</taxon>
        <taxon>Streptococcus</taxon>
    </lineage>
</organism>
<comment type="function">
    <text evidence="1">Participates in chromosomal partition during cell division. May act via the formation of a condensin-like complex containing Smc and ScpA that pull DNA away from mid-cell into both cell halves.</text>
</comment>
<comment type="subunit">
    <text evidence="1">Homodimer. Homodimerization may be required to stabilize the binding of ScpA to the Smc head domains. Component of a cohesin-like complex composed of ScpA, ScpB and the Smc homodimer, in which ScpA and ScpB bind to the head domain of Smc. The presence of the three proteins is required for the association of the complex with DNA.</text>
</comment>
<comment type="subcellular location">
    <subcellularLocation>
        <location evidence="1">Cytoplasm</location>
    </subcellularLocation>
    <text evidence="1">Associated with two foci at the outer edges of the nucleoid region in young cells, and at four foci within both cell halves in older cells.</text>
</comment>
<comment type="similarity">
    <text evidence="1">Belongs to the ScpB family.</text>
</comment>
<name>SCPB_STRP6</name>